<name>FADH_ASPOR</name>
<proteinExistence type="inferred from homology"/>
<dbReference type="EC" id="1.1.1.284" evidence="2"/>
<dbReference type="EC" id="1.1.1.1" evidence="2"/>
<dbReference type="EC" id="1.1.1.-" evidence="2"/>
<dbReference type="EMBL" id="BA000053">
    <property type="protein sequence ID" value="BAE62210.1"/>
    <property type="status" value="ALT_SEQ"/>
    <property type="molecule type" value="Genomic_DNA"/>
</dbReference>
<dbReference type="SMR" id="P0CL53"/>
<dbReference type="STRING" id="510516.P0CL53"/>
<dbReference type="EnsemblFungi" id="BAE62210">
    <property type="protein sequence ID" value="BAE62210"/>
    <property type="gene ID" value="AO090701000508"/>
</dbReference>
<dbReference type="Proteomes" id="UP000006564">
    <property type="component" value="Chromosome 5"/>
</dbReference>
<dbReference type="GO" id="GO:0005829">
    <property type="term" value="C:cytosol"/>
    <property type="evidence" value="ECO:0007669"/>
    <property type="project" value="TreeGrafter"/>
</dbReference>
<dbReference type="GO" id="GO:0004022">
    <property type="term" value="F:alcohol dehydrogenase (NAD+) activity"/>
    <property type="evidence" value="ECO:0007669"/>
    <property type="project" value="RHEA"/>
</dbReference>
<dbReference type="GO" id="GO:0106322">
    <property type="term" value="F:S-(hydroxymethyl)glutathione dehydrogenase (NAD+) activity"/>
    <property type="evidence" value="ECO:0007669"/>
    <property type="project" value="RHEA"/>
</dbReference>
<dbReference type="GO" id="GO:0106321">
    <property type="term" value="F:S-(hydroxymethyl)glutathione dehydrogenase (NADP+) activity"/>
    <property type="evidence" value="ECO:0007669"/>
    <property type="project" value="RHEA"/>
</dbReference>
<dbReference type="GO" id="GO:0080007">
    <property type="term" value="F:S-nitrosoglutathione reductase (NADH) activity"/>
    <property type="evidence" value="ECO:0007669"/>
    <property type="project" value="RHEA"/>
</dbReference>
<dbReference type="GO" id="GO:0008270">
    <property type="term" value="F:zinc ion binding"/>
    <property type="evidence" value="ECO:0007669"/>
    <property type="project" value="InterPro"/>
</dbReference>
<dbReference type="GO" id="GO:0046294">
    <property type="term" value="P:formaldehyde catabolic process"/>
    <property type="evidence" value="ECO:0007669"/>
    <property type="project" value="InterPro"/>
</dbReference>
<dbReference type="CDD" id="cd08300">
    <property type="entry name" value="alcohol_DH_class_III"/>
    <property type="match status" value="1"/>
</dbReference>
<dbReference type="FunFam" id="3.40.50.720:FF:000003">
    <property type="entry name" value="S-(hydroxymethyl)glutathione dehydrogenase"/>
    <property type="match status" value="1"/>
</dbReference>
<dbReference type="FunFam" id="3.90.180.10:FF:000001">
    <property type="entry name" value="S-(hydroxymethyl)glutathione dehydrogenase"/>
    <property type="match status" value="1"/>
</dbReference>
<dbReference type="Gene3D" id="3.90.180.10">
    <property type="entry name" value="Medium-chain alcohol dehydrogenases, catalytic domain"/>
    <property type="match status" value="1"/>
</dbReference>
<dbReference type="Gene3D" id="3.40.50.720">
    <property type="entry name" value="NAD(P)-binding Rossmann-like Domain"/>
    <property type="match status" value="1"/>
</dbReference>
<dbReference type="InterPro" id="IPR013149">
    <property type="entry name" value="ADH-like_C"/>
</dbReference>
<dbReference type="InterPro" id="IPR013154">
    <property type="entry name" value="ADH-like_N"/>
</dbReference>
<dbReference type="InterPro" id="IPR014183">
    <property type="entry name" value="ADH_3"/>
</dbReference>
<dbReference type="InterPro" id="IPR002328">
    <property type="entry name" value="ADH_Zn_CS"/>
</dbReference>
<dbReference type="InterPro" id="IPR011032">
    <property type="entry name" value="GroES-like_sf"/>
</dbReference>
<dbReference type="InterPro" id="IPR036291">
    <property type="entry name" value="NAD(P)-bd_dom_sf"/>
</dbReference>
<dbReference type="NCBIfam" id="TIGR02818">
    <property type="entry name" value="adh_III_F_hyde"/>
    <property type="match status" value="1"/>
</dbReference>
<dbReference type="PANTHER" id="PTHR43880">
    <property type="entry name" value="ALCOHOL DEHYDROGENASE"/>
    <property type="match status" value="1"/>
</dbReference>
<dbReference type="PANTHER" id="PTHR43880:SF12">
    <property type="entry name" value="ALCOHOL DEHYDROGENASE CLASS-3"/>
    <property type="match status" value="1"/>
</dbReference>
<dbReference type="Pfam" id="PF08240">
    <property type="entry name" value="ADH_N"/>
    <property type="match status" value="1"/>
</dbReference>
<dbReference type="Pfam" id="PF00107">
    <property type="entry name" value="ADH_zinc_N"/>
    <property type="match status" value="1"/>
</dbReference>
<dbReference type="SUPFAM" id="SSF50129">
    <property type="entry name" value="GroES-like"/>
    <property type="match status" value="2"/>
</dbReference>
<dbReference type="SUPFAM" id="SSF51735">
    <property type="entry name" value="NAD(P)-binding Rossmann-fold domains"/>
    <property type="match status" value="1"/>
</dbReference>
<dbReference type="PROSITE" id="PS00059">
    <property type="entry name" value="ADH_ZINC"/>
    <property type="match status" value="1"/>
</dbReference>
<reference key="1">
    <citation type="journal article" date="2005" name="Nature">
        <title>Genome sequencing and analysis of Aspergillus oryzae.</title>
        <authorList>
            <person name="Machida M."/>
            <person name="Asai K."/>
            <person name="Sano M."/>
            <person name="Tanaka T."/>
            <person name="Kumagai T."/>
            <person name="Terai G."/>
            <person name="Kusumoto K."/>
            <person name="Arima T."/>
            <person name="Akita O."/>
            <person name="Kashiwagi Y."/>
            <person name="Abe K."/>
            <person name="Gomi K."/>
            <person name="Horiuchi H."/>
            <person name="Kitamoto K."/>
            <person name="Kobayashi T."/>
            <person name="Takeuchi M."/>
            <person name="Denning D.W."/>
            <person name="Galagan J.E."/>
            <person name="Nierman W.C."/>
            <person name="Yu J."/>
            <person name="Archer D.B."/>
            <person name="Bennett J.W."/>
            <person name="Bhatnagar D."/>
            <person name="Cleveland T.E."/>
            <person name="Fedorova N.D."/>
            <person name="Gotoh O."/>
            <person name="Horikawa H."/>
            <person name="Hosoyama A."/>
            <person name="Ichinomiya M."/>
            <person name="Igarashi R."/>
            <person name="Iwashita K."/>
            <person name="Juvvadi P.R."/>
            <person name="Kato M."/>
            <person name="Kato Y."/>
            <person name="Kin T."/>
            <person name="Kokubun A."/>
            <person name="Maeda H."/>
            <person name="Maeyama N."/>
            <person name="Maruyama J."/>
            <person name="Nagasaki H."/>
            <person name="Nakajima T."/>
            <person name="Oda K."/>
            <person name="Okada K."/>
            <person name="Paulsen I."/>
            <person name="Sakamoto K."/>
            <person name="Sawano T."/>
            <person name="Takahashi M."/>
            <person name="Takase K."/>
            <person name="Terabayashi Y."/>
            <person name="Wortman J.R."/>
            <person name="Yamada O."/>
            <person name="Yamagata Y."/>
            <person name="Anazawa H."/>
            <person name="Hata Y."/>
            <person name="Koide Y."/>
            <person name="Komori T."/>
            <person name="Koyama Y."/>
            <person name="Minetoki T."/>
            <person name="Suharnan S."/>
            <person name="Tanaka A."/>
            <person name="Isono K."/>
            <person name="Kuhara S."/>
            <person name="Ogasawara N."/>
            <person name="Kikuchi H."/>
        </authorList>
    </citation>
    <scope>NUCLEOTIDE SEQUENCE [LARGE SCALE GENOMIC DNA]</scope>
    <source>
        <strain>ATCC 42149 / RIB 40</strain>
    </source>
</reference>
<comment type="function">
    <text evidence="2">Oxidizes long-chain alcohols and, in the presence of glutathione, is able to oxidize formaldehyde. Also acts as a S-nitroso-glutathione reductase by catalyzing the NADH-dependent reduction of S-nitrosoglutathione, thereby regulating protein S-nitrosylation.</text>
</comment>
<comment type="catalytic activity">
    <reaction evidence="2">
        <text>a primary alcohol + NAD(+) = an aldehyde + NADH + H(+)</text>
        <dbReference type="Rhea" id="RHEA:10736"/>
        <dbReference type="ChEBI" id="CHEBI:15378"/>
        <dbReference type="ChEBI" id="CHEBI:15734"/>
        <dbReference type="ChEBI" id="CHEBI:17478"/>
        <dbReference type="ChEBI" id="CHEBI:57540"/>
        <dbReference type="ChEBI" id="CHEBI:57945"/>
        <dbReference type="EC" id="1.1.1.1"/>
    </reaction>
</comment>
<comment type="catalytic activity">
    <reaction evidence="2">
        <text>a secondary alcohol + NAD(+) = a ketone + NADH + H(+)</text>
        <dbReference type="Rhea" id="RHEA:10740"/>
        <dbReference type="ChEBI" id="CHEBI:15378"/>
        <dbReference type="ChEBI" id="CHEBI:17087"/>
        <dbReference type="ChEBI" id="CHEBI:35681"/>
        <dbReference type="ChEBI" id="CHEBI:57540"/>
        <dbReference type="ChEBI" id="CHEBI:57945"/>
        <dbReference type="EC" id="1.1.1.1"/>
    </reaction>
</comment>
<comment type="catalytic activity">
    <reaction evidence="2">
        <text>S-(hydroxymethyl)glutathione + NADP(+) = S-formylglutathione + NADPH + H(+)</text>
        <dbReference type="Rhea" id="RHEA:19981"/>
        <dbReference type="ChEBI" id="CHEBI:15378"/>
        <dbReference type="ChEBI" id="CHEBI:57688"/>
        <dbReference type="ChEBI" id="CHEBI:57783"/>
        <dbReference type="ChEBI" id="CHEBI:58349"/>
        <dbReference type="ChEBI" id="CHEBI:58758"/>
        <dbReference type="EC" id="1.1.1.284"/>
    </reaction>
</comment>
<comment type="catalytic activity">
    <reaction evidence="1">
        <text>S-(hydroxymethyl)glutathione + NAD(+) = S-formylglutathione + NADH + H(+)</text>
        <dbReference type="Rhea" id="RHEA:19985"/>
        <dbReference type="ChEBI" id="CHEBI:15378"/>
        <dbReference type="ChEBI" id="CHEBI:57540"/>
        <dbReference type="ChEBI" id="CHEBI:57688"/>
        <dbReference type="ChEBI" id="CHEBI:57945"/>
        <dbReference type="ChEBI" id="CHEBI:58758"/>
        <dbReference type="EC" id="1.1.1.284"/>
    </reaction>
</comment>
<comment type="catalytic activity">
    <reaction evidence="2">
        <text>S-nitrosoglutathione + NADH + H(+) = S-(hydroxysulfenamide)glutathione + NAD(+)</text>
        <dbReference type="Rhea" id="RHEA:78371"/>
        <dbReference type="ChEBI" id="CHEBI:15378"/>
        <dbReference type="ChEBI" id="CHEBI:57540"/>
        <dbReference type="ChEBI" id="CHEBI:57945"/>
        <dbReference type="ChEBI" id="CHEBI:145544"/>
        <dbReference type="ChEBI" id="CHEBI:229723"/>
    </reaction>
</comment>
<comment type="cofactor">
    <cofactor evidence="1">
        <name>Zn(2+)</name>
        <dbReference type="ChEBI" id="CHEBI:29105"/>
    </cofactor>
    <text evidence="1">Binds 2 Zn(2+) ions per subunit.</text>
</comment>
<comment type="similarity">
    <text evidence="4">Belongs to the zinc-containing alcohol dehydrogenase family. Class-III subfamily.</text>
</comment>
<comment type="sequence caution" evidence="4">
    <conflict type="erroneous gene model prediction">
        <sequence resource="EMBL-CDS" id="BAE62210"/>
    </conflict>
</comment>
<feature type="chain" id="PRO_0000406152" description="S-(hydroxymethyl)glutathione dehydrogenase">
    <location>
        <begin position="1"/>
        <end position="383"/>
    </location>
</feature>
<feature type="binding site" evidence="3">
    <location>
        <position position="51"/>
    </location>
    <ligand>
        <name>Zn(2+)</name>
        <dbReference type="ChEBI" id="CHEBI:29105"/>
        <label>1</label>
        <note>catalytic</note>
    </ligand>
</feature>
<feature type="binding site" evidence="3">
    <location>
        <position position="52"/>
    </location>
    <ligand>
        <name>NAD(+)</name>
        <dbReference type="ChEBI" id="CHEBI:57540"/>
    </ligand>
</feature>
<feature type="binding site" evidence="3">
    <location>
        <position position="73"/>
    </location>
    <ligand>
        <name>Zn(2+)</name>
        <dbReference type="ChEBI" id="CHEBI:29105"/>
        <label>1</label>
        <note>catalytic</note>
    </ligand>
</feature>
<feature type="binding site" evidence="3">
    <location>
        <position position="74"/>
    </location>
    <ligand>
        <name>Zn(2+)</name>
        <dbReference type="ChEBI" id="CHEBI:29105"/>
        <label>1</label>
        <note>catalytic</note>
    </ligand>
</feature>
<feature type="binding site" evidence="3">
    <location>
        <position position="103"/>
    </location>
    <ligand>
        <name>Zn(2+)</name>
        <dbReference type="ChEBI" id="CHEBI:29105"/>
        <label>2</label>
    </ligand>
</feature>
<feature type="binding site" evidence="3">
    <location>
        <position position="106"/>
    </location>
    <ligand>
        <name>Zn(2+)</name>
        <dbReference type="ChEBI" id="CHEBI:29105"/>
        <label>2</label>
    </ligand>
</feature>
<feature type="binding site" evidence="3">
    <location>
        <position position="109"/>
    </location>
    <ligand>
        <name>Zn(2+)</name>
        <dbReference type="ChEBI" id="CHEBI:29105"/>
        <label>2</label>
    </ligand>
</feature>
<feature type="binding site" evidence="3">
    <location>
        <position position="117"/>
    </location>
    <ligand>
        <name>Zn(2+)</name>
        <dbReference type="ChEBI" id="CHEBI:29105"/>
        <label>2</label>
    </ligand>
</feature>
<feature type="binding site" evidence="3">
    <location>
        <position position="180"/>
    </location>
    <ligand>
        <name>Zn(2+)</name>
        <dbReference type="ChEBI" id="CHEBI:29105"/>
        <label>1</label>
        <note>catalytic</note>
    </ligand>
</feature>
<feature type="binding site" evidence="3">
    <location>
        <begin position="205"/>
        <end position="210"/>
    </location>
    <ligand>
        <name>NAD(+)</name>
        <dbReference type="ChEBI" id="CHEBI:57540"/>
    </ligand>
</feature>
<feature type="binding site" evidence="3">
    <location>
        <position position="229"/>
    </location>
    <ligand>
        <name>NAD(+)</name>
        <dbReference type="ChEBI" id="CHEBI:57540"/>
    </ligand>
</feature>
<feature type="binding site" evidence="3">
    <location>
        <begin position="298"/>
        <end position="300"/>
    </location>
    <ligand>
        <name>NAD(+)</name>
        <dbReference type="ChEBI" id="CHEBI:57540"/>
    </ligand>
</feature>
<evidence type="ECO:0000250" key="1">
    <source>
        <dbReference type="UniProtKB" id="P06525"/>
    </source>
</evidence>
<evidence type="ECO:0000250" key="2">
    <source>
        <dbReference type="UniProtKB" id="P32771"/>
    </source>
</evidence>
<evidence type="ECO:0000250" key="3">
    <source>
        <dbReference type="UniProtKB" id="Q96533"/>
    </source>
</evidence>
<evidence type="ECO:0000305" key="4"/>
<protein>
    <recommendedName>
        <fullName>S-(hydroxymethyl)glutathione dehydrogenase</fullName>
        <ecNumber evidence="2">1.1.1.284</ecNumber>
    </recommendedName>
    <alternativeName>
        <fullName evidence="2">Alcohol dehydrogenase</fullName>
        <ecNumber evidence="2">1.1.1.1</ecNumber>
    </alternativeName>
    <alternativeName>
        <fullName>Glutathione-dependent formaldehyde dehydrogenase</fullName>
        <shortName>FALDH</shortName>
        <shortName>FDH</shortName>
        <shortName>FLD</shortName>
        <shortName>GSH-FDH</shortName>
        <ecNumber evidence="2">1.1.1.-</ecNumber>
    </alternativeName>
</protein>
<organism>
    <name type="scientific">Aspergillus oryzae (strain ATCC 42149 / RIB 40)</name>
    <name type="common">Yellow koji mold</name>
    <dbReference type="NCBI Taxonomy" id="510516"/>
    <lineage>
        <taxon>Eukaryota</taxon>
        <taxon>Fungi</taxon>
        <taxon>Dikarya</taxon>
        <taxon>Ascomycota</taxon>
        <taxon>Pezizomycotina</taxon>
        <taxon>Eurotiomycetes</taxon>
        <taxon>Eurotiomycetidae</taxon>
        <taxon>Eurotiales</taxon>
        <taxon>Aspergillaceae</taxon>
        <taxon>Aspergillus</taxon>
        <taxon>Aspergillus subgen. Circumdati</taxon>
    </lineage>
</organism>
<gene>
    <name type="primary">FDH1</name>
    <name type="synonym">ADH1</name>
    <name type="ORF">AO090701000508-A</name>
</gene>
<keyword id="KW-0479">Metal-binding</keyword>
<keyword id="KW-0520">NAD</keyword>
<keyword id="KW-0560">Oxidoreductase</keyword>
<keyword id="KW-1185">Reference proteome</keyword>
<keyword id="KW-0862">Zinc</keyword>
<accession>P0CL53</accession>
<accession>Q2U8A5</accession>
<sequence>MRHVLNKEQLLMVKQAAIAWAAAEPLSVENVEVAPPKAHEVRIKILHTGVCHTDAYTLSGKDPEGAFPVILGHEGAGIVESVGEGVTNVKVGDYVIALYTPECGECKFCRSGKTNLCGKIRATQGRGVMPDGTTRFKARGKDLLHFMGCSTFSEYTVVADISVVAVTPSCPTDRSCLLGCGITTGYGAATVTANITEGSNVAVFGAGCVGLSIVQGAVKKKAGKIIVVDINDGKEAWAYKFGATHFLNPARLRKTVQDELIDMTDGGCDYTFDCTGNVSVMRAALEACHKGWGESIVIGVAAAGQEITTRPFQLVTGRVWRGCAFGGVKGRSQLPGLVEDYLNGDLKIDEFITHRETLANINTAFEQMKQGDCIRCVVDMVVS</sequence>